<comment type="function">
    <text evidence="4 5">Involved in actively transporting phosphate into cells via Na(+) cotransport in the renal brush border membrane (PubMed:12690469, PubMed:16113079). The cotransport has a Na(+):Pi stoichiometry of 2:1 and is electroneutral (PubMed:16113079).</text>
</comment>
<comment type="catalytic activity">
    <reaction evidence="4 5">
        <text>2 Na(+)(out) + phosphate(out) = 2 Na(+)(in) + phosphate(in)</text>
        <dbReference type="Rhea" id="RHEA:71259"/>
        <dbReference type="ChEBI" id="CHEBI:29101"/>
        <dbReference type="ChEBI" id="CHEBI:43474"/>
    </reaction>
    <physiologicalReaction direction="left-to-right" evidence="7">
        <dbReference type="Rhea" id="RHEA:71260"/>
    </physiologicalReaction>
</comment>
<comment type="biophysicochemical properties">
    <kinetics>
        <KM evidence="4">200 uM for phosphate</KM>
    </kinetics>
    <phDependence>
        <text evidence="4">Optimum pH is 7.5.</text>
    </phDependence>
</comment>
<comment type="subcellular location">
    <subcellularLocation>
        <location evidence="4">Apical cell membrane</location>
        <topology evidence="3">Multi-pass membrane protein</topology>
    </subcellularLocation>
    <text evidence="4">Localized at the brush border membrane in the kidney.</text>
</comment>
<comment type="tissue specificity">
    <text evidence="4">Expressed only in the kidney.</text>
</comment>
<comment type="similarity">
    <text evidence="6">Belongs to the SLC34A transporter family.</text>
</comment>
<proteinExistence type="evidence at protein level"/>
<feature type="chain" id="PRO_0000068618" description="Sodium-dependent phosphate transport protein 2C">
    <location>
        <begin position="1"/>
        <end position="601"/>
    </location>
</feature>
<feature type="topological domain" description="Cytoplasmic" evidence="3">
    <location>
        <begin position="1"/>
        <end position="75"/>
    </location>
</feature>
<feature type="transmembrane region" description="Helical; Name=M1" evidence="3">
    <location>
        <begin position="76"/>
        <end position="96"/>
    </location>
</feature>
<feature type="topological domain" description="Extracellular" evidence="3">
    <location>
        <begin position="97"/>
        <end position="110"/>
    </location>
</feature>
<feature type="transmembrane region" description="Helical; Name=M2" evidence="3">
    <location>
        <begin position="111"/>
        <end position="131"/>
    </location>
</feature>
<feature type="topological domain" description="Cytoplasmic" evidence="3">
    <location>
        <begin position="132"/>
        <end position="187"/>
    </location>
</feature>
<feature type="transmembrane region" description="Helical; Name=M3" evidence="3">
    <location>
        <begin position="188"/>
        <end position="208"/>
    </location>
</feature>
<feature type="topological domain" description="Extracellular" evidence="3">
    <location>
        <begin position="209"/>
        <end position="324"/>
    </location>
</feature>
<feature type="transmembrane region" description="Helical; Name=M4" evidence="3">
    <location>
        <begin position="325"/>
        <end position="345"/>
    </location>
</feature>
<feature type="topological domain" description="Cytoplasmic" evidence="3">
    <location>
        <begin position="346"/>
        <end position="369"/>
    </location>
</feature>
<feature type="transmembrane region" description="Helical; Name=M5" evidence="3">
    <location>
        <begin position="370"/>
        <end position="390"/>
    </location>
</feature>
<feature type="topological domain" description="Extracellular" evidence="3">
    <location>
        <begin position="391"/>
        <end position="441"/>
    </location>
</feature>
<feature type="transmembrane region" description="Helical; Name=M6" evidence="3">
    <location>
        <begin position="442"/>
        <end position="462"/>
    </location>
</feature>
<feature type="topological domain" description="Cytoplasmic" evidence="3">
    <location>
        <begin position="463"/>
        <end position="487"/>
    </location>
</feature>
<feature type="transmembrane region" description="Helical; Name=M7" evidence="3">
    <location>
        <begin position="488"/>
        <end position="508"/>
    </location>
</feature>
<feature type="topological domain" description="Extracellular" evidence="3">
    <location>
        <begin position="509"/>
        <end position="512"/>
    </location>
</feature>
<feature type="transmembrane region" description="Helical; Name=M8" evidence="3">
    <location>
        <begin position="513"/>
        <end position="533"/>
    </location>
</feature>
<feature type="topological domain" description="Cytoplasmic" evidence="3">
    <location>
        <begin position="534"/>
        <end position="601"/>
    </location>
</feature>
<feature type="modified residue" description="Phosphoserine" evidence="2">
    <location>
        <position position="4"/>
    </location>
</feature>
<feature type="glycosylation site" description="N-linked (GlcNAc...) asparagine" evidence="3">
    <location>
        <position position="264"/>
    </location>
</feature>
<feature type="glycosylation site" description="N-linked (GlcNAc...) asparagine" evidence="3">
    <location>
        <position position="267"/>
    </location>
</feature>
<feature type="glycosylation site" description="N-linked (GlcNAc...) asparagine" evidence="3">
    <location>
        <position position="299"/>
    </location>
</feature>
<feature type="disulfide bond" evidence="1">
    <location>
        <begin position="275"/>
        <end position="311"/>
    </location>
</feature>
<feature type="mutagenesis site" description="Change of cotransport Na(+):Pi stoichiometry to 3:1; when associated with D-195." evidence="5">
    <original>SGS</original>
    <variation>AGA</variation>
    <location>
        <begin position="189"/>
        <end position="191"/>
    </location>
</feature>
<feature type="mutagenesis site" description="Change of cotransport Na(+):Pi stoichiometry to 3:1; when associated with 189-AGA-191." evidence="5">
    <original>G</original>
    <variation>D</variation>
    <location>
        <position position="195"/>
    </location>
</feature>
<feature type="sequence conflict" description="In Ref. 1; BAB83241/BAC55069." evidence="6" ref="1">
    <original>K</original>
    <variation>R</variation>
    <location>
        <position position="353"/>
    </location>
</feature>
<feature type="sequence conflict" description="In Ref. 1; BAB83241/BAC55069." evidence="6" ref="1">
    <original>K</original>
    <variation>R</variation>
    <location>
        <position position="361"/>
    </location>
</feature>
<name>NPT2C_MOUSE</name>
<reference key="1">
    <citation type="journal article" date="2003" name="Pflugers Arch.">
        <title>Cloning, gene structure and dietary regulation of the type-IIc Na/Pi cotransporter in the mouse kidney.</title>
        <authorList>
            <person name="Ohkido I."/>
            <person name="Segawa H."/>
            <person name="Yanagida R."/>
            <person name="Nakamura M."/>
            <person name="Miyamoto K."/>
        </authorList>
    </citation>
    <scope>NUCLEOTIDE SEQUENCE [GENOMIC DNA / MRNA]</scope>
    <scope>FUNCTION</scope>
    <scope>TRANSPORTER ACTIVITY</scope>
    <scope>SUBCELLULAR LOCATION</scope>
    <scope>BIOPHYSICOCHEMICAL PROPERTIES</scope>
    <scope>INDUCTION</scope>
</reference>
<reference key="2">
    <citation type="journal article" date="2009" name="PLoS Biol.">
        <title>Lineage-specific biology revealed by a finished genome assembly of the mouse.</title>
        <authorList>
            <person name="Church D.M."/>
            <person name="Goodstadt L."/>
            <person name="Hillier L.W."/>
            <person name="Zody M.C."/>
            <person name="Goldstein S."/>
            <person name="She X."/>
            <person name="Bult C.J."/>
            <person name="Agarwala R."/>
            <person name="Cherry J.L."/>
            <person name="DiCuccio M."/>
            <person name="Hlavina W."/>
            <person name="Kapustin Y."/>
            <person name="Meric P."/>
            <person name="Maglott D."/>
            <person name="Birtle Z."/>
            <person name="Marques A.C."/>
            <person name="Graves T."/>
            <person name="Zhou S."/>
            <person name="Teague B."/>
            <person name="Potamousis K."/>
            <person name="Churas C."/>
            <person name="Place M."/>
            <person name="Herschleb J."/>
            <person name="Runnheim R."/>
            <person name="Forrest D."/>
            <person name="Amos-Landgraf J."/>
            <person name="Schwartz D.C."/>
            <person name="Cheng Z."/>
            <person name="Lindblad-Toh K."/>
            <person name="Eichler E.E."/>
            <person name="Ponting C.P."/>
        </authorList>
    </citation>
    <scope>NUCLEOTIDE SEQUENCE [LARGE SCALE GENOMIC DNA]</scope>
    <source>
        <strain>C57BL/6J</strain>
    </source>
</reference>
<reference key="3">
    <citation type="submission" date="2005-07" db="EMBL/GenBank/DDBJ databases">
        <authorList>
            <person name="Mural R.J."/>
            <person name="Adams M.D."/>
            <person name="Myers E.W."/>
            <person name="Smith H.O."/>
            <person name="Venter J.C."/>
        </authorList>
    </citation>
    <scope>NUCLEOTIDE SEQUENCE [LARGE SCALE GENOMIC DNA]</scope>
</reference>
<reference key="4">
    <citation type="journal article" date="2004" name="Genome Res.">
        <title>The status, quality, and expansion of the NIH full-length cDNA project: the Mammalian Gene Collection (MGC).</title>
        <authorList>
            <consortium name="The MGC Project Team"/>
        </authorList>
    </citation>
    <scope>NUCLEOTIDE SEQUENCE [LARGE SCALE MRNA]</scope>
    <source>
        <tissue>Brain</tissue>
    </source>
</reference>
<reference key="5">
    <citation type="journal article" date="2005" name="Proc. Natl. Acad. Sci. U.S.A.">
        <title>Renouncing electroneutrality is not free of charge: switching on electrogenicity in a Na+-coupled phosphate cotransporter.</title>
        <authorList>
            <person name="Bacconi A."/>
            <person name="Virkki L.V."/>
            <person name="Biber J."/>
            <person name="Murer H."/>
            <person name="Forster I.C."/>
        </authorList>
    </citation>
    <scope>FUNCTION</scope>
    <scope>TRANSPORTER ACTIVITY</scope>
    <scope>STOICHIOMETRY</scope>
    <scope>MUTAGENESIS OF GLY-195 AND 189-SER--SER-191</scope>
</reference>
<reference key="6">
    <citation type="journal article" date="2010" name="Cell">
        <title>A tissue-specific atlas of mouse protein phosphorylation and expression.</title>
        <authorList>
            <person name="Huttlin E.L."/>
            <person name="Jedrychowski M.P."/>
            <person name="Elias J.E."/>
            <person name="Goswami T."/>
            <person name="Rad R."/>
            <person name="Beausoleil S.A."/>
            <person name="Villen J."/>
            <person name="Haas W."/>
            <person name="Sowa M.E."/>
            <person name="Gygi S.P."/>
        </authorList>
    </citation>
    <scope>IDENTIFICATION BY MASS SPECTROMETRY [LARGE SCALE ANALYSIS]</scope>
    <source>
        <tissue>Kidney</tissue>
    </source>
</reference>
<keyword id="KW-1003">Cell membrane</keyword>
<keyword id="KW-1015">Disulfide bond</keyword>
<keyword id="KW-0325">Glycoprotein</keyword>
<keyword id="KW-0406">Ion transport</keyword>
<keyword id="KW-0472">Membrane</keyword>
<keyword id="KW-0597">Phosphoprotein</keyword>
<keyword id="KW-1185">Reference proteome</keyword>
<keyword id="KW-0915">Sodium</keyword>
<keyword id="KW-0739">Sodium transport</keyword>
<keyword id="KW-0769">Symport</keyword>
<keyword id="KW-0812">Transmembrane</keyword>
<keyword id="KW-1133">Transmembrane helix</keyword>
<keyword id="KW-0813">Transport</keyword>
<protein>
    <recommendedName>
        <fullName>Sodium-dependent phosphate transport protein 2C</fullName>
        <shortName>Sodium-phosphate transport protein 2C</shortName>
    </recommendedName>
    <alternativeName>
        <fullName>Na(+)-dependent phosphate cotransporter 2C</fullName>
    </alternativeName>
    <alternativeName>
        <fullName>Sodium/phosphate cotransporter 2C</fullName>
        <shortName>Na(+)/Pi cotransporter 2C</shortName>
        <shortName>NaPi-2c</shortName>
    </alternativeName>
    <alternativeName>
        <fullName>Solute carrier family 34 member 3</fullName>
    </alternativeName>
</protein>
<sequence length="601" mass="63939">MPNSLAGGQVPNPTLDAFDLVDRSLRNAGISGSIPGLEEGGTDPWTFSPLKNADQLKEVGMASRLRRVVSSFLKACGLLGSLYFFICSLDILSSAFQLLGSKMAGDIFKDNVVLSNPVAGLVIGVLVTVLVQSSSTSSSIVVSMVASKLLTVQVSVPIIMGVNVGTSITSTLVSMAQSGDRDEFQRAFSGSAVHGIFNWLTVLVLLPLESATAALERLSELALGAASLQPGQQAPDILKALTRPFTHLIIQLDSSVITSGITSNTTNSSLIKHWCGFRGETPQGSSEGCGLFSSCTERNSSASPEEDRLLCHHLFAGSKLTDLAVGFILLAGSLLVLCVCLVLIVKLLNSVLKGRIAQAVKTVINADFPFPFGWLSGYLAILVGAGLTFLLQSSSVFTAAIVPLMGVGVIDLERAYPLFLGSNIGTTTTALLAALASPADMLIFAVQVALIHFFFNLAGILLWYLVPVLRLPIPLAKRFGNLTAQYRWVAIVYLLLTFLLLPLAAFGLSLAGGTVLAAVGGPLVGLVLLIILVNVLQQHRPSWLPRCLQSWAWLPLWLHSLEPWDRLVTACCPCRACSNSPMTSKVAHCYENPQVIASQQL</sequence>
<accession>Q80SU6</accession>
<accession>Q05AC3</accession>
<dbReference type="EMBL" id="AB054999">
    <property type="protein sequence ID" value="BAB83241.1"/>
    <property type="molecule type" value="mRNA"/>
</dbReference>
<dbReference type="EMBL" id="AB080134">
    <property type="protein sequence ID" value="BAC55069.1"/>
    <property type="molecule type" value="Genomic_DNA"/>
</dbReference>
<dbReference type="EMBL" id="AL732309">
    <property type="status" value="NOT_ANNOTATED_CDS"/>
    <property type="molecule type" value="Genomic_DNA"/>
</dbReference>
<dbReference type="EMBL" id="CH466542">
    <property type="protein sequence ID" value="EDL08215.1"/>
    <property type="molecule type" value="Genomic_DNA"/>
</dbReference>
<dbReference type="EMBL" id="CH466542">
    <property type="protein sequence ID" value="EDL08216.1"/>
    <property type="molecule type" value="Genomic_DNA"/>
</dbReference>
<dbReference type="EMBL" id="BC125326">
    <property type="protein sequence ID" value="AAI25327.1"/>
    <property type="molecule type" value="mRNA"/>
</dbReference>
<dbReference type="EMBL" id="BC131997">
    <property type="protein sequence ID" value="AAI31998.1"/>
    <property type="molecule type" value="mRNA"/>
</dbReference>
<dbReference type="CCDS" id="CCDS15754.1"/>
<dbReference type="RefSeq" id="NP_543130.2">
    <property type="nucleotide sequence ID" value="NM_080854.3"/>
</dbReference>
<dbReference type="RefSeq" id="XP_006497740.1">
    <property type="nucleotide sequence ID" value="XM_006497677.2"/>
</dbReference>
<dbReference type="RefSeq" id="XP_006497741.1">
    <property type="nucleotide sequence ID" value="XM_006497678.2"/>
</dbReference>
<dbReference type="FunCoup" id="Q80SU6">
    <property type="interactions" value="14"/>
</dbReference>
<dbReference type="STRING" id="10090.ENSMUSP00000006638"/>
<dbReference type="BindingDB" id="Q80SU6"/>
<dbReference type="ChEMBL" id="CHEMBL4295882"/>
<dbReference type="GlyCosmos" id="Q80SU6">
    <property type="glycosylation" value="3 sites, No reported glycans"/>
</dbReference>
<dbReference type="GlyGen" id="Q80SU6">
    <property type="glycosylation" value="3 sites"/>
</dbReference>
<dbReference type="iPTMnet" id="Q80SU6"/>
<dbReference type="PhosphoSitePlus" id="Q80SU6"/>
<dbReference type="jPOST" id="Q80SU6"/>
<dbReference type="PaxDb" id="10090-ENSMUSP00000006638"/>
<dbReference type="ProteomicsDB" id="253005"/>
<dbReference type="Antibodypedia" id="18978">
    <property type="antibodies" value="117 antibodies from 21 providers"/>
</dbReference>
<dbReference type="DNASU" id="142681"/>
<dbReference type="Ensembl" id="ENSMUST00000006638.8">
    <property type="protein sequence ID" value="ENSMUSP00000006638.8"/>
    <property type="gene ID" value="ENSMUSG00000006469.14"/>
</dbReference>
<dbReference type="GeneID" id="142681"/>
<dbReference type="KEGG" id="mmu:142681"/>
<dbReference type="UCSC" id="uc008iqt.3">
    <property type="organism name" value="mouse"/>
</dbReference>
<dbReference type="AGR" id="MGI:2159410"/>
<dbReference type="CTD" id="142680"/>
<dbReference type="MGI" id="MGI:2159410">
    <property type="gene designation" value="Slc34a3"/>
</dbReference>
<dbReference type="VEuPathDB" id="HostDB:ENSMUSG00000006469"/>
<dbReference type="eggNOG" id="ENOG502QTG0">
    <property type="taxonomic scope" value="Eukaryota"/>
</dbReference>
<dbReference type="GeneTree" id="ENSGT00950000183177"/>
<dbReference type="HOGENOM" id="CLU_025063_0_0_1"/>
<dbReference type="InParanoid" id="Q80SU6"/>
<dbReference type="OMA" id="VHSIFNW"/>
<dbReference type="OrthoDB" id="76259at2759"/>
<dbReference type="PhylomeDB" id="Q80SU6"/>
<dbReference type="TreeFam" id="TF313981"/>
<dbReference type="Reactome" id="R-MMU-427589">
    <property type="pathway name" value="Type II Na+/Pi cotransporters"/>
</dbReference>
<dbReference type="BioGRID-ORCS" id="142681">
    <property type="hits" value="3 hits in 82 CRISPR screens"/>
</dbReference>
<dbReference type="PRO" id="PR:Q80SU6"/>
<dbReference type="Proteomes" id="UP000000589">
    <property type="component" value="Chromosome 2"/>
</dbReference>
<dbReference type="RNAct" id="Q80SU6">
    <property type="molecule type" value="protein"/>
</dbReference>
<dbReference type="Bgee" id="ENSMUSG00000006469">
    <property type="expression patterns" value="Expressed in right kidney and 29 other cell types or tissues"/>
</dbReference>
<dbReference type="GO" id="GO:0016324">
    <property type="term" value="C:apical plasma membrane"/>
    <property type="evidence" value="ECO:0000314"/>
    <property type="project" value="MGI"/>
</dbReference>
<dbReference type="GO" id="GO:0005903">
    <property type="term" value="C:brush border"/>
    <property type="evidence" value="ECO:0000314"/>
    <property type="project" value="MGI"/>
</dbReference>
<dbReference type="GO" id="GO:0031526">
    <property type="term" value="C:brush border membrane"/>
    <property type="evidence" value="ECO:0000314"/>
    <property type="project" value="UniProtKB"/>
</dbReference>
<dbReference type="GO" id="GO:0005436">
    <property type="term" value="F:sodium:phosphate symporter activity"/>
    <property type="evidence" value="ECO:0000314"/>
    <property type="project" value="MGI"/>
</dbReference>
<dbReference type="GO" id="GO:0030643">
    <property type="term" value="P:intracellular phosphate ion homeostasis"/>
    <property type="evidence" value="ECO:0007669"/>
    <property type="project" value="Ensembl"/>
</dbReference>
<dbReference type="GO" id="GO:0006817">
    <property type="term" value="P:phosphate ion transport"/>
    <property type="evidence" value="ECO:0000314"/>
    <property type="project" value="MGI"/>
</dbReference>
<dbReference type="GO" id="GO:0044341">
    <property type="term" value="P:sodium-dependent phosphate transport"/>
    <property type="evidence" value="ECO:0007669"/>
    <property type="project" value="InterPro"/>
</dbReference>
<dbReference type="InterPro" id="IPR003841">
    <property type="entry name" value="Na/Pi_transpt"/>
</dbReference>
<dbReference type="NCBIfam" id="TIGR01013">
    <property type="entry name" value="2a58"/>
    <property type="match status" value="1"/>
</dbReference>
<dbReference type="PANTHER" id="PTHR10010:SF35">
    <property type="entry name" value="SODIUM-DEPENDENT PHOSPHATE TRANSPORT PROTEIN 2C"/>
    <property type="match status" value="1"/>
</dbReference>
<dbReference type="PANTHER" id="PTHR10010">
    <property type="entry name" value="SOLUTE CARRIER FAMILY 34 SODIUM PHOSPHATE , MEMBER 2-RELATED"/>
    <property type="match status" value="1"/>
</dbReference>
<dbReference type="Pfam" id="PF02690">
    <property type="entry name" value="Na_Pi_cotrans"/>
    <property type="match status" value="2"/>
</dbReference>
<evidence type="ECO:0000250" key="1">
    <source>
        <dbReference type="UniProtKB" id="Q06496"/>
    </source>
</evidence>
<evidence type="ECO:0000250" key="2">
    <source>
        <dbReference type="UniProtKB" id="Q8K4R8"/>
    </source>
</evidence>
<evidence type="ECO:0000255" key="3"/>
<evidence type="ECO:0000269" key="4">
    <source>
    </source>
</evidence>
<evidence type="ECO:0000269" key="5">
    <source>
    </source>
</evidence>
<evidence type="ECO:0000305" key="6"/>
<evidence type="ECO:0000305" key="7">
    <source>
    </source>
</evidence>
<organism>
    <name type="scientific">Mus musculus</name>
    <name type="common">Mouse</name>
    <dbReference type="NCBI Taxonomy" id="10090"/>
    <lineage>
        <taxon>Eukaryota</taxon>
        <taxon>Metazoa</taxon>
        <taxon>Chordata</taxon>
        <taxon>Craniata</taxon>
        <taxon>Vertebrata</taxon>
        <taxon>Euteleostomi</taxon>
        <taxon>Mammalia</taxon>
        <taxon>Eutheria</taxon>
        <taxon>Euarchontoglires</taxon>
        <taxon>Glires</taxon>
        <taxon>Rodentia</taxon>
        <taxon>Myomorpha</taxon>
        <taxon>Muroidea</taxon>
        <taxon>Muridae</taxon>
        <taxon>Murinae</taxon>
        <taxon>Mus</taxon>
        <taxon>Mus</taxon>
    </lineage>
</organism>
<gene>
    <name type="primary">Slc34a3</name>
    <name type="synonym">Npt2c</name>
</gene>